<proteinExistence type="inferred from homology"/>
<feature type="chain" id="PRO_1000085835" description="Anhydro-N-acetylmuramic acid kinase">
    <location>
        <begin position="1"/>
        <end position="374"/>
    </location>
</feature>
<feature type="binding site" evidence="1">
    <location>
        <begin position="12"/>
        <end position="19"/>
    </location>
    <ligand>
        <name>ATP</name>
        <dbReference type="ChEBI" id="CHEBI:30616"/>
    </ligand>
</feature>
<protein>
    <recommendedName>
        <fullName evidence="1">Anhydro-N-acetylmuramic acid kinase</fullName>
        <ecNumber evidence="1">2.7.1.170</ecNumber>
    </recommendedName>
    <alternativeName>
        <fullName evidence="1">AnhMurNAc kinase</fullName>
    </alternativeName>
</protein>
<gene>
    <name evidence="1" type="primary">anmK</name>
    <name type="ordered locus">SARI_01536</name>
</gene>
<reference key="1">
    <citation type="submission" date="2007-11" db="EMBL/GenBank/DDBJ databases">
        <authorList>
            <consortium name="The Salmonella enterica serovar Arizonae Genome Sequencing Project"/>
            <person name="McClelland M."/>
            <person name="Sanderson E.K."/>
            <person name="Porwollik S."/>
            <person name="Spieth J."/>
            <person name="Clifton W.S."/>
            <person name="Fulton R."/>
            <person name="Chunyan W."/>
            <person name="Wollam A."/>
            <person name="Shah N."/>
            <person name="Pepin K."/>
            <person name="Bhonagiri V."/>
            <person name="Nash W."/>
            <person name="Johnson M."/>
            <person name="Thiruvilangam P."/>
            <person name="Wilson R."/>
        </authorList>
    </citation>
    <scope>NUCLEOTIDE SEQUENCE [LARGE SCALE GENOMIC DNA]</scope>
    <source>
        <strain>ATCC BAA-731 / CDC346-86 / RSK2980</strain>
    </source>
</reference>
<organism>
    <name type="scientific">Salmonella arizonae (strain ATCC BAA-731 / CDC346-86 / RSK2980)</name>
    <dbReference type="NCBI Taxonomy" id="41514"/>
    <lineage>
        <taxon>Bacteria</taxon>
        <taxon>Pseudomonadati</taxon>
        <taxon>Pseudomonadota</taxon>
        <taxon>Gammaproteobacteria</taxon>
        <taxon>Enterobacterales</taxon>
        <taxon>Enterobacteriaceae</taxon>
        <taxon>Salmonella</taxon>
    </lineage>
</organism>
<name>ANMK_SALAR</name>
<accession>A9MEH5</accession>
<evidence type="ECO:0000255" key="1">
    <source>
        <dbReference type="HAMAP-Rule" id="MF_01270"/>
    </source>
</evidence>
<dbReference type="EC" id="2.7.1.170" evidence="1"/>
<dbReference type="EMBL" id="CP000880">
    <property type="protein sequence ID" value="ABX21432.1"/>
    <property type="molecule type" value="Genomic_DNA"/>
</dbReference>
<dbReference type="SMR" id="A9MEH5"/>
<dbReference type="STRING" id="41514.SARI_01536"/>
<dbReference type="KEGG" id="ses:SARI_01536"/>
<dbReference type="HOGENOM" id="CLU_038782_0_0_6"/>
<dbReference type="UniPathway" id="UPA00343"/>
<dbReference type="UniPathway" id="UPA00544"/>
<dbReference type="Proteomes" id="UP000002084">
    <property type="component" value="Chromosome"/>
</dbReference>
<dbReference type="GO" id="GO:0005524">
    <property type="term" value="F:ATP binding"/>
    <property type="evidence" value="ECO:0007669"/>
    <property type="project" value="UniProtKB-UniRule"/>
</dbReference>
<dbReference type="GO" id="GO:0016301">
    <property type="term" value="F:kinase activity"/>
    <property type="evidence" value="ECO:0007669"/>
    <property type="project" value="UniProtKB-KW"/>
</dbReference>
<dbReference type="GO" id="GO:0016773">
    <property type="term" value="F:phosphotransferase activity, alcohol group as acceptor"/>
    <property type="evidence" value="ECO:0007669"/>
    <property type="project" value="UniProtKB-UniRule"/>
</dbReference>
<dbReference type="GO" id="GO:0097175">
    <property type="term" value="P:1,6-anhydro-N-acetyl-beta-muramic acid catabolic process"/>
    <property type="evidence" value="ECO:0007669"/>
    <property type="project" value="UniProtKB-UniRule"/>
</dbReference>
<dbReference type="GO" id="GO:0006040">
    <property type="term" value="P:amino sugar metabolic process"/>
    <property type="evidence" value="ECO:0007669"/>
    <property type="project" value="InterPro"/>
</dbReference>
<dbReference type="GO" id="GO:0009254">
    <property type="term" value="P:peptidoglycan turnover"/>
    <property type="evidence" value="ECO:0007669"/>
    <property type="project" value="UniProtKB-UniRule"/>
</dbReference>
<dbReference type="CDD" id="cd24050">
    <property type="entry name" value="ASKHA_NBD_ANMK"/>
    <property type="match status" value="1"/>
</dbReference>
<dbReference type="Gene3D" id="3.30.420.40">
    <property type="match status" value="2"/>
</dbReference>
<dbReference type="HAMAP" id="MF_01270">
    <property type="entry name" value="AnhMurNAc_kinase"/>
    <property type="match status" value="1"/>
</dbReference>
<dbReference type="InterPro" id="IPR005338">
    <property type="entry name" value="Anhydro_N_Ac-Mur_kinase"/>
</dbReference>
<dbReference type="InterPro" id="IPR043129">
    <property type="entry name" value="ATPase_NBD"/>
</dbReference>
<dbReference type="NCBIfam" id="NF007138">
    <property type="entry name" value="PRK09585.1-1"/>
    <property type="match status" value="1"/>
</dbReference>
<dbReference type="NCBIfam" id="NF007139">
    <property type="entry name" value="PRK09585.1-3"/>
    <property type="match status" value="1"/>
</dbReference>
<dbReference type="NCBIfam" id="NF007148">
    <property type="entry name" value="PRK09585.3-2"/>
    <property type="match status" value="1"/>
</dbReference>
<dbReference type="PANTHER" id="PTHR30605">
    <property type="entry name" value="ANHYDRO-N-ACETYLMURAMIC ACID KINASE"/>
    <property type="match status" value="1"/>
</dbReference>
<dbReference type="PANTHER" id="PTHR30605:SF0">
    <property type="entry name" value="ANHYDRO-N-ACETYLMURAMIC ACID KINASE"/>
    <property type="match status" value="1"/>
</dbReference>
<dbReference type="Pfam" id="PF03702">
    <property type="entry name" value="AnmK"/>
    <property type="match status" value="1"/>
</dbReference>
<dbReference type="SUPFAM" id="SSF53067">
    <property type="entry name" value="Actin-like ATPase domain"/>
    <property type="match status" value="1"/>
</dbReference>
<comment type="function">
    <text evidence="1">Catalyzes the specific phosphorylation of 1,6-anhydro-N-acetylmuramic acid (anhMurNAc) with the simultaneous cleavage of the 1,6-anhydro ring, generating MurNAc-6-P. Is required for the utilization of anhMurNAc either imported from the medium or derived from its own cell wall murein, and thus plays a role in cell wall recycling.</text>
</comment>
<comment type="catalytic activity">
    <reaction evidence="1">
        <text>1,6-anhydro-N-acetyl-beta-muramate + ATP + H2O = N-acetyl-D-muramate 6-phosphate + ADP + H(+)</text>
        <dbReference type="Rhea" id="RHEA:24952"/>
        <dbReference type="ChEBI" id="CHEBI:15377"/>
        <dbReference type="ChEBI" id="CHEBI:15378"/>
        <dbReference type="ChEBI" id="CHEBI:30616"/>
        <dbReference type="ChEBI" id="CHEBI:58690"/>
        <dbReference type="ChEBI" id="CHEBI:58722"/>
        <dbReference type="ChEBI" id="CHEBI:456216"/>
        <dbReference type="EC" id="2.7.1.170"/>
    </reaction>
</comment>
<comment type="pathway">
    <text evidence="1">Amino-sugar metabolism; 1,6-anhydro-N-acetylmuramate degradation.</text>
</comment>
<comment type="pathway">
    <text evidence="1">Cell wall biogenesis; peptidoglycan recycling.</text>
</comment>
<comment type="similarity">
    <text evidence="1">Belongs to the anhydro-N-acetylmuramic acid kinase family.</text>
</comment>
<sequence>MKSGRFIGVMSGTSLDGVDVVLAAIDETMVAQQASLTWPIPGHLKKGILDICQGQLLTLSQLGQLDTQLGRLFAQAVNALLAQQHLQPRDIVAIGCHGQTVWHEPTGDAPHTLQIGDNNHIVAHTGITVVGDFRRRDIALGGQGAPLVPAFHHALLGHPTEKRMVLNIGGIANLSLLFPRQAVRGYDTGPGNMLMDAWIWRQCAQPYDKDAAWAKEGKVILPLLQKMLSDPYFAASAPKSTGREYFNYGWLERHLAAFPGASACDVQATLAELTAVSISHQVLLNGGCERLMVCGGGSRNPLVMARLAALLPGIEVATTDKAGISGDDMEALAFAWLAWRTLAGLPGNLPSVTGASKASILGAIYPATPELRVN</sequence>
<keyword id="KW-0067">ATP-binding</keyword>
<keyword id="KW-0119">Carbohydrate metabolism</keyword>
<keyword id="KW-0418">Kinase</keyword>
<keyword id="KW-0547">Nucleotide-binding</keyword>
<keyword id="KW-1185">Reference proteome</keyword>
<keyword id="KW-0808">Transferase</keyword>